<reference key="1">
    <citation type="journal article" date="1989" name="J. Mol. Evol.">
        <title>Organization and nucleotide sequence of a transcriptional unit of Methanococcus vannielii comprising genes for protein synthesis elongation factors and ribosomal proteins.</title>
        <authorList>
            <person name="Lechner K."/>
            <person name="Heller G."/>
            <person name="Boeck A."/>
        </authorList>
    </citation>
    <scope>NUCLEOTIDE SEQUENCE [GENOMIC DNA]</scope>
</reference>
<reference key="2">
    <citation type="submission" date="2007-06" db="EMBL/GenBank/DDBJ databases">
        <title>Complete sequence of Methanococcus vannielii SB.</title>
        <authorList>
            <consortium name="US DOE Joint Genome Institute"/>
            <person name="Copeland A."/>
            <person name="Lucas S."/>
            <person name="Lapidus A."/>
            <person name="Barry K."/>
            <person name="Glavina del Rio T."/>
            <person name="Dalin E."/>
            <person name="Tice H."/>
            <person name="Pitluck S."/>
            <person name="Chain P."/>
            <person name="Malfatti S."/>
            <person name="Shin M."/>
            <person name="Vergez L."/>
            <person name="Schmutz J."/>
            <person name="Larimer F."/>
            <person name="Land M."/>
            <person name="Hauser L."/>
            <person name="Kyrpides N."/>
            <person name="Anderson I."/>
            <person name="Sieprawska-Lupa M."/>
            <person name="Whitman W.B."/>
            <person name="Richardson P."/>
        </authorList>
    </citation>
    <scope>NUCLEOTIDE SEQUENCE [LARGE SCALE GENOMIC DNA]</scope>
    <source>
        <strain>ATCC 35089 / DSM 1224 / JCM 13029 / OCM 148 / SB</strain>
    </source>
</reference>
<comment type="function">
    <text evidence="1">Participates in transcription termination.</text>
</comment>
<comment type="subcellular location">
    <subcellularLocation>
        <location evidence="1">Cytoplasm</location>
    </subcellularLocation>
</comment>
<comment type="similarity">
    <text evidence="1">Belongs to the NusA family.</text>
</comment>
<proteinExistence type="inferred from homology"/>
<accession>P14026</accession>
<accession>A6UQ10</accession>
<sequence>MRIKLNTEDIMRISLFEKMTGANVIDSTSDDEKIVFVVKEGDIGAAIGKGGENVKNATDKFGKKIDLIEYSEDLKQFIKNIFAPIELEDVWVKKFGNDLVVYVRVHPRLRRAIIGDKGKNIDRAVDIAGRLAGVKNIKVVAGLRKDADNRPKKDEIPEKAAESSENVQAEENQ</sequence>
<gene>
    <name evidence="1" type="primary">nusA</name>
    <name type="ordered locus">Mevan_0676</name>
</gene>
<evidence type="ECO:0000255" key="1">
    <source>
        <dbReference type="HAMAP-Rule" id="MF_00945"/>
    </source>
</evidence>
<evidence type="ECO:0000256" key="2">
    <source>
        <dbReference type="SAM" id="MobiDB-lite"/>
    </source>
</evidence>
<dbReference type="EMBL" id="X15970">
    <property type="protein sequence ID" value="CAA34088.1"/>
    <property type="molecule type" value="Genomic_DNA"/>
</dbReference>
<dbReference type="EMBL" id="CP000742">
    <property type="protein sequence ID" value="ABR54582.1"/>
    <property type="molecule type" value="Genomic_DNA"/>
</dbReference>
<dbReference type="PIR" id="S06622">
    <property type="entry name" value="QQMX2"/>
</dbReference>
<dbReference type="RefSeq" id="WP_011972484.1">
    <property type="nucleotide sequence ID" value="NC_009634.1"/>
</dbReference>
<dbReference type="SMR" id="P14026"/>
<dbReference type="STRING" id="406327.Mevan_0676"/>
<dbReference type="GeneID" id="5325045"/>
<dbReference type="KEGG" id="mvn:Mevan_0676"/>
<dbReference type="eggNOG" id="arCOG01760">
    <property type="taxonomic scope" value="Archaea"/>
</dbReference>
<dbReference type="HOGENOM" id="CLU_131906_1_0_2"/>
<dbReference type="OrthoDB" id="4116at2157"/>
<dbReference type="Proteomes" id="UP000001107">
    <property type="component" value="Chromosome"/>
</dbReference>
<dbReference type="GO" id="GO:0005829">
    <property type="term" value="C:cytosol"/>
    <property type="evidence" value="ECO:0007669"/>
    <property type="project" value="TreeGrafter"/>
</dbReference>
<dbReference type="GO" id="GO:0003723">
    <property type="term" value="F:RNA binding"/>
    <property type="evidence" value="ECO:0007669"/>
    <property type="project" value="UniProtKB-KW"/>
</dbReference>
<dbReference type="GO" id="GO:0006353">
    <property type="term" value="P:DNA-templated transcription termination"/>
    <property type="evidence" value="ECO:0007669"/>
    <property type="project" value="UniProtKB-UniRule"/>
</dbReference>
<dbReference type="GO" id="GO:0031564">
    <property type="term" value="P:transcription antitermination"/>
    <property type="evidence" value="ECO:0007669"/>
    <property type="project" value="InterPro"/>
</dbReference>
<dbReference type="CDD" id="cd22530">
    <property type="entry name" value="KH-II_NusA_arch_rpt1"/>
    <property type="match status" value="1"/>
</dbReference>
<dbReference type="CDD" id="cd22531">
    <property type="entry name" value="KH-II_NusA_arch_rpt2"/>
    <property type="match status" value="1"/>
</dbReference>
<dbReference type="Gene3D" id="3.30.300.20">
    <property type="match status" value="2"/>
</dbReference>
<dbReference type="HAMAP" id="MF_00945_A">
    <property type="entry name" value="NusA_A"/>
    <property type="match status" value="1"/>
</dbReference>
<dbReference type="InterPro" id="IPR004087">
    <property type="entry name" value="KH_dom"/>
</dbReference>
<dbReference type="InterPro" id="IPR015946">
    <property type="entry name" value="KH_dom-like_a/b"/>
</dbReference>
<dbReference type="InterPro" id="IPR025249">
    <property type="entry name" value="KH_dom_NusA-like"/>
</dbReference>
<dbReference type="InterPro" id="IPR009019">
    <property type="entry name" value="KH_sf_prok-type"/>
</dbReference>
<dbReference type="InterPro" id="IPR010212">
    <property type="entry name" value="NusA_arc"/>
</dbReference>
<dbReference type="InterPro" id="IPR030842">
    <property type="entry name" value="NusA_bac"/>
</dbReference>
<dbReference type="NCBIfam" id="TIGR01952">
    <property type="entry name" value="nusA_arch"/>
    <property type="match status" value="1"/>
</dbReference>
<dbReference type="NCBIfam" id="NF006261">
    <property type="entry name" value="PRK08406.1-5"/>
    <property type="match status" value="1"/>
</dbReference>
<dbReference type="PANTHER" id="PTHR22648">
    <property type="entry name" value="TRANSCRIPTION TERMINATION FACTOR NUSA"/>
    <property type="match status" value="1"/>
</dbReference>
<dbReference type="PANTHER" id="PTHR22648:SF0">
    <property type="entry name" value="TRANSCRIPTION TERMINATION_ANTITERMINATION PROTEIN NUSA"/>
    <property type="match status" value="1"/>
</dbReference>
<dbReference type="Pfam" id="PF13184">
    <property type="entry name" value="KH_5"/>
    <property type="match status" value="1"/>
</dbReference>
<dbReference type="SMART" id="SM00322">
    <property type="entry name" value="KH"/>
    <property type="match status" value="2"/>
</dbReference>
<dbReference type="SUPFAM" id="SSF54814">
    <property type="entry name" value="Prokaryotic type KH domain (KH-domain type II)"/>
    <property type="match status" value="2"/>
</dbReference>
<dbReference type="PROSITE" id="PS50084">
    <property type="entry name" value="KH_TYPE_1"/>
    <property type="match status" value="1"/>
</dbReference>
<protein>
    <recommendedName>
        <fullName evidence="1">Probable transcription termination protein NusA</fullName>
    </recommendedName>
</protein>
<feature type="chain" id="PRO_0000181984" description="Probable transcription termination protein NusA">
    <location>
        <begin position="1"/>
        <end position="173"/>
    </location>
</feature>
<feature type="domain" description="KH" evidence="1">
    <location>
        <begin position="31"/>
        <end position="97"/>
    </location>
</feature>
<feature type="region of interest" description="Disordered" evidence="2">
    <location>
        <begin position="147"/>
        <end position="173"/>
    </location>
</feature>
<feature type="compositionally biased region" description="Basic and acidic residues" evidence="2">
    <location>
        <begin position="147"/>
        <end position="162"/>
    </location>
</feature>
<feature type="compositionally biased region" description="Polar residues" evidence="2">
    <location>
        <begin position="163"/>
        <end position="173"/>
    </location>
</feature>
<keyword id="KW-0963">Cytoplasm</keyword>
<keyword id="KW-0694">RNA-binding</keyword>
<keyword id="KW-0804">Transcription</keyword>
<keyword id="KW-0805">Transcription regulation</keyword>
<keyword id="KW-0806">Transcription termination</keyword>
<name>NUSA_METVS</name>
<organism>
    <name type="scientific">Methanococcus vannielii (strain ATCC 35089 / DSM 1224 / JCM 13029 / OCM 148 / SB)</name>
    <dbReference type="NCBI Taxonomy" id="406327"/>
    <lineage>
        <taxon>Archaea</taxon>
        <taxon>Methanobacteriati</taxon>
        <taxon>Methanobacteriota</taxon>
        <taxon>Methanomada group</taxon>
        <taxon>Methanococci</taxon>
        <taxon>Methanococcales</taxon>
        <taxon>Methanococcaceae</taxon>
        <taxon>Methanococcus</taxon>
    </lineage>
</organism>